<keyword id="KW-0175">Coiled coil</keyword>
<keyword id="KW-0436">Ligase</keyword>
<keyword id="KW-1185">Reference proteome</keyword>
<dbReference type="EC" id="6.-.-.-" evidence="1"/>
<dbReference type="EMBL" id="CP000159">
    <property type="protein sequence ID" value="ABC43781.1"/>
    <property type="status" value="ALT_INIT"/>
    <property type="molecule type" value="Genomic_DNA"/>
</dbReference>
<dbReference type="RefSeq" id="YP_446236.1">
    <property type="nucleotide sequence ID" value="NC_007677.1"/>
</dbReference>
<dbReference type="SMR" id="Q2S0P5"/>
<dbReference type="STRING" id="309807.SRU_2130"/>
<dbReference type="EnsemblBacteria" id="ABC43781">
    <property type="protein sequence ID" value="ABC43781"/>
    <property type="gene ID" value="SRU_2130"/>
</dbReference>
<dbReference type="KEGG" id="sru:SRU_2130"/>
<dbReference type="PATRIC" id="fig|309807.25.peg.2218"/>
<dbReference type="eggNOG" id="COG4365">
    <property type="taxonomic scope" value="Bacteria"/>
</dbReference>
<dbReference type="HOGENOM" id="CLU_022249_1_0_10"/>
<dbReference type="OrthoDB" id="9765151at2"/>
<dbReference type="Proteomes" id="UP000008674">
    <property type="component" value="Chromosome"/>
</dbReference>
<dbReference type="GO" id="GO:0016874">
    <property type="term" value="F:ligase activity"/>
    <property type="evidence" value="ECO:0007669"/>
    <property type="project" value="UniProtKB-UniRule"/>
</dbReference>
<dbReference type="HAMAP" id="MF_01867">
    <property type="entry name" value="BshC"/>
    <property type="match status" value="1"/>
</dbReference>
<dbReference type="InterPro" id="IPR011199">
    <property type="entry name" value="Bacillithiol_biosynth_BshC"/>
</dbReference>
<dbReference type="InterPro" id="IPR055399">
    <property type="entry name" value="CC_BshC"/>
</dbReference>
<dbReference type="InterPro" id="IPR055398">
    <property type="entry name" value="Rossmann-like_BshC"/>
</dbReference>
<dbReference type="NCBIfam" id="TIGR03998">
    <property type="entry name" value="thiol_BshC"/>
    <property type="match status" value="1"/>
</dbReference>
<dbReference type="Pfam" id="PF24850">
    <property type="entry name" value="CC_BshC"/>
    <property type="match status" value="1"/>
</dbReference>
<dbReference type="Pfam" id="PF10079">
    <property type="entry name" value="Rossmann-like_BshC"/>
    <property type="match status" value="1"/>
</dbReference>
<dbReference type="PIRSF" id="PIRSF012535">
    <property type="entry name" value="UCP012535"/>
    <property type="match status" value="1"/>
</dbReference>
<accession>Q2S0P5</accession>
<comment type="similarity">
    <text evidence="1">Belongs to the BshC family.</text>
</comment>
<comment type="sequence caution" evidence="2">
    <conflict type="erroneous initiation">
        <sequence resource="EMBL-CDS" id="ABC43781"/>
    </conflict>
</comment>
<gene>
    <name evidence="1" type="primary">bshC</name>
    <name type="ordered locus">SRU_2130</name>
</gene>
<reference key="1">
    <citation type="journal article" date="2005" name="Proc. Natl. Acad. Sci. U.S.A.">
        <title>The genome of Salinibacter ruber: convergence and gene exchange among hyperhalophilic bacteria and archaea.</title>
        <authorList>
            <person name="Mongodin E.F."/>
            <person name="Nelson K.E."/>
            <person name="Daugherty S."/>
            <person name="DeBoy R.T."/>
            <person name="Wister J."/>
            <person name="Khouri H."/>
            <person name="Weidman J."/>
            <person name="Walsh D.A."/>
            <person name="Papke R.T."/>
            <person name="Sanchez Perez G."/>
            <person name="Sharma A.K."/>
            <person name="Nesbo C.L."/>
            <person name="MacLeod D."/>
            <person name="Bapteste E."/>
            <person name="Doolittle W.F."/>
            <person name="Charlebois R.L."/>
            <person name="Legault B."/>
            <person name="Rodriguez-Valera F."/>
        </authorList>
    </citation>
    <scope>NUCLEOTIDE SEQUENCE [LARGE SCALE GENOMIC DNA]</scope>
    <source>
        <strain>DSM 13855 / CECT 5946 / M31</strain>
    </source>
</reference>
<protein>
    <recommendedName>
        <fullName evidence="1">Putative cysteine ligase BshC</fullName>
        <ecNumber evidence="1">6.-.-.-</ecNumber>
    </recommendedName>
</protein>
<name>BSHC_SALRD</name>
<evidence type="ECO:0000255" key="1">
    <source>
        <dbReference type="HAMAP-Rule" id="MF_01867"/>
    </source>
</evidence>
<evidence type="ECO:0000305" key="2"/>
<organism>
    <name type="scientific">Salinibacter ruber (strain DSM 13855 / M31)</name>
    <dbReference type="NCBI Taxonomy" id="309807"/>
    <lineage>
        <taxon>Bacteria</taxon>
        <taxon>Pseudomonadati</taxon>
        <taxon>Rhodothermota</taxon>
        <taxon>Rhodothermia</taxon>
        <taxon>Rhodothermales</taxon>
        <taxon>Salinibacteraceae</taxon>
        <taxon>Salinibacter</taxon>
    </lineage>
</organism>
<sequence length="547" mass="61109">MPSPTERAAHRTPPAALGAFPDLFVDYCTDFDAVADFYPGDWQSRPARRAAATAAAKRPADREVLADTLLDQNERWGLDERTRSHIETLRDPDSIAVVTGQQVGLFTGPLYTIYKTITTLQLIEEWADQTGRPVVPVFWVEGEDHDFEEIAAAHVLQHNEVVPLSYEPGVDDNPGAVGRLALTDGIQDVVDRLDEALPPSDFKPAVMEQVRAAYQPGTRLEDAFARLMRSLFEDDGLVFMNPDDARLKALTRPLFRRDIEDPRASVAPVNAAGRALRDRGYHAQVNAHPTNLFWLGDDGRWAIDLEDENAFRLRGTDRTFSRSDLLNRLDETPERFSPNVVLRPLMQDHLLPTAAYVAGPGEVSYFAQYGGVYDWAGLDMPLIHPRASVSLVEGKVQKVLDKYGLTVADFRDGLEPLFQDVVVDTMEVDVDALFSEALPQLHQTLNALKPEVEAVDRTLGASTEATRSAIMDEMEALKQKVVRAEKRQQDEVRAQLKKAHTNLRPDGTLQERTINVLYYLNKYSPALLDDLRHALRTDTSAHQVVGV</sequence>
<feature type="chain" id="PRO_0000378250" description="Putative cysteine ligase BshC">
    <location>
        <begin position="1"/>
        <end position="547"/>
    </location>
</feature>
<feature type="coiled-coil region" evidence="1">
    <location>
        <begin position="461"/>
        <end position="504"/>
    </location>
</feature>
<proteinExistence type="inferred from homology"/>